<name>NDVB_RHIME</name>
<accession>P20471</accession>
<comment type="function">
    <text evidence="2 3">Involved in the biosynthesis of cyclic beta-(1,2)-glucan (PubMed:2154461, PubMed:8830704). It seems that NdvB is involved in three enzymatic activities. First, it may catalyze the transfer of the first glucose from UDP-Glc to an unknown amino acid (PubMed:8830704). In the second enzymatic activity (UDP-Glc:beta-(1,2) oligosaccharide glucosyltransferase), it may be responsible for chain elongation (PubMed:8830704). Finally, in the third activity, it may catalyze glucan cyclization and release from the protein (PubMed:8830704). NdvB is also involved in nodule invasion and in bacteroid development (PubMed:2154461).</text>
</comment>
<comment type="catalytic activity">
    <reaction evidence="7">
        <text>[(1-&gt;2)-beta-D-glucosyl](n) + UDP-alpha-D-glucose = [(1-&gt;2)-beta-D-glucosyl](n+1) + UDP + H(+)</text>
        <dbReference type="Rhea" id="RHEA:53084"/>
        <dbReference type="Rhea" id="RHEA-COMP:11881"/>
        <dbReference type="Rhea" id="RHEA-COMP:13458"/>
        <dbReference type="ChEBI" id="CHEBI:15378"/>
        <dbReference type="ChEBI" id="CHEBI:27517"/>
        <dbReference type="ChEBI" id="CHEBI:58223"/>
        <dbReference type="ChEBI" id="CHEBI:58885"/>
    </reaction>
</comment>
<comment type="subcellular location">
    <subcellularLocation>
        <location evidence="1 6 7">Cell inner membrane</location>
        <topology evidence="1">Multi-pass membrane protein</topology>
    </subcellularLocation>
</comment>
<comment type="disruption phenotype">
    <text evidence="2">Cells lacking this gene are unable to produce cyclic beta-(1,2)-glucan and produce white ineffective nodules on alfalfa plant.</text>
</comment>
<comment type="similarity">
    <text evidence="5">Belongs to the NdvB family.</text>
</comment>
<comment type="sequence caution" evidence="5">
    <conflict type="erroneous initiation">
        <sequence resource="EMBL-CDS" id="AAA26305"/>
    </conflict>
    <text>Extended N-terminus.</text>
</comment>
<gene>
    <name evidence="4" type="primary">ndvB</name>
    <name type="ordered locus">R03286</name>
    <name type="ORF">SMc04382</name>
</gene>
<sequence>MLQNTTQSNLPREPEAKQIDYNDSIRSTYFSIDDLRACGASLAEKGTSALPGFFPFEFRARHRENEKEILRVYRATAADVEAGASITPAAEWLLDNHHVVEEAIQEVRRDFPRRFYRQLPTLSVSGTVIPRTMALAWLYVAHTHSTVTRESITAMVEGFQEHETLKIGELWALPSILRFVLIENLRRIAIRVERSRGMRRKANEVADQLIRLNDPEGCRTLLVESEALAADNTFIAQLLYRMRDGSQSSGAVIAWIEERLERRGTDVEEALVAEQNRLSSGNATMSNIIRSLREIDDTDWAVWFESVSKIDATLREGSDYAALDFGSRNTYRDTIEKLARRSGHSEHEVTEIAIEMVEEAKAAAAVEAPLQEPNVGSFLVGKQRLALEKRIGYSPSIFQHLIRSVRKLDWFAIAGPNILLTILAMIVVYAFVSPMDIPSGAKLIMLLLFALPASEGAMGLFNTVFTLFAKPSRLVGYEFLDGIPEDARTLVVVPCLIAKRDHVDELVRNLEVHYLANPRGEIYFALLSDWADSKSEEAPADTDVLEYAKREIASLSARYAYDGKTRFFLLHRRRLYNEAEGVWMGWERKRGKLHELNLLLRGDRDTSFLQGANMVPEGVQYVMTLDSDTRLMRDAVTKLVGKLYHPINRPVVNPRTQEVVTGYSLLQPRVTPSLTTGSEASAFQRIFTINRGIDPYVFTVSDVYQDIAGEGSFTGKGLYHVDAFEAALKSRIEENAVLSHDLLEGSYARCALVTDIELVEDFPIRYEVEMSRQHRWARGDWQLLPYIFNPKNGLSMLGRWKMYDNLRRSLIPVAWLAASVMGWYYMEPTPALIWQLVLIFSLFVAPTLSLISGIMPRRNDIVARAHLHTVLSDIRAANAQVALRIVFIAHNAAMMADAIVRSLYRTFVSRKLMLEWRTAAQVQSAGHGSIGDYFRAMWTAPALALVSLALAAISDTGLPFIGLPFALIWAASPAVAWFVSQSAETEDQLVVSEEAIEEMRKIARRTWRYFEAFVTAEQNFLPPDNFQETPQPVLAERTSPTNIGVYLLSVMSARSFGWIGFEETITRLEQTIATIDRMPKYRGHLFNWYRTRGLEPMEPRYVSSVDSGNLAGHLIAVSSMCREWAEAPSAHVQGNLDGIGDVAAILKEALNELPDDRKTVRPLRRLVEERIAGFQNALAAVKRERELASIRVINLAVLARDMHKLTVNLDHEVRTVQSGEVATWAGSLVAACEAHIADGVFDLGAIEALRQRLLVLKERARDIAFSMDFSFLFRPERRLLSIGYRVNANELDEACYDLLASEARLTSLFAIAKGDLPTEHWYKLGRPIVPIGARGALVSWSGSMFEYLMPPLVMQERQGGILNQTNNLVVQEQINHGRRLGTPWGISEAAFNARDHELTYQYTNFGVPTLGLKRGLGQNAVIAPYASILACMYDPKSALANLARLREVGALGAYGYHDAVDFTPTRVPEGQKCAVVRNYYAHHHGMSVAAVANVVFNGQLREWFHADPVIEAAELLLQEKAPRDIPVMAAKREPEALGKGQADLLRPEVRVVEDPINQDRETVLLSNGHYSVMLTATGAGYARWNGQSVTRWTPDPVEDRTGTFIFLRDTVTGDWWSATAEPRRAPGEKTVTRFGDDKAEFVKTVGDLTSEVECIVATEHDAEGRRVILLNTGTEDRFIEVTSYAEPVLAMDDADSSHPTFSKMFLRTEISRHGDVIWVSRNKRSPGDPDIEVAHLVTDNAGSERHTQAETDRRRFLGQGRTLAEAAAFDPGATLSGTDGFTLDPIVSLRRVVRVPAGKKVSVIFWTIAAPDREGVDRAIDRYRHPETFNHELIHAWTRSQVQMRHVGITSKEAASFQMLGRYLVYPDMHLRADAETVKTGLASQSALWPLAISGDFPIFCLRINDDGDLGIAREALRAQEYLRARGITADLVVVNERASSYAQDLQHTLDSMCENLRLRGLSDGPRQHIFAVRRDLMEPETWSTLISASRAVFHARNGTISDQIARATSLYSKSSEKKEEGAEMLLPVIREADARTAVELDGGDLDFWNGFGGFAEDGREYAVRLRGGEATPQPWINVISNEQFGFHVSAEGAAFSWSRNSRDYQLTPWTNDAVVNRPGEAIFVRDMASGAVLTPYAALSRRKSALFETRHGLGYSRFLSTQDELEIEAMHTVHRTLPAKLVRLTIRNRSSAARKLRVYGYAEWVLGNNRSRTAPFVLSEWDESAKTLVATNPYSIDYPGRCAFFASDGDIAGYTASRREFLGRAGGILAPQAVISGAELTGSTDVDGDACAALATDITVEAGVERQVTFFLGDADNPDQVRAVLEELRADSFGAALEAAKAFWGDFTGVVKVETPDRAFNHMINHWLPYQALGCRIMARSAFYQASGAFGFRDQLQDTLAFLIHRPALARAQILNAAARQFVEGDVQHWWLPGTDAGVRTMISDDVVWLAHAVAHYCAVTGEEDILKEKVPFITGPALEEGQHDSFYKPDVADEVGDVYEHCARALDLAIHRTGANGLPLILGGDWNDGMNRVGEAGEGTSVWLGWFLAGTLRAFLPYARARKDKPRVALWERHLEALKDALEQAGWDGDYYRRGYYDDDTPLGSAENGECRIDSIAQSWSTLSGEGDKERSLRAMDAVMAELVDPEKRIVRLFTPPLETTKQDPGYIKAYPPGVRENGGQYTHAATWVVLAFAAQERAEEAWRTFRMLNPVSHALSQVDAEHYRVEPYVVAADIYGEGALAGRGGWTWYTGSAGWLYRAGVEGILGIRKRGDKLLIRPVLPSEWPGYSAEVRVNGTTHRISVSRDSKSGEPVVSVNNSVTKNAHEGVLL</sequence>
<organism>
    <name type="scientific">Rhizobium meliloti (strain 1021)</name>
    <name type="common">Ensifer meliloti</name>
    <name type="synonym">Sinorhizobium meliloti</name>
    <dbReference type="NCBI Taxonomy" id="266834"/>
    <lineage>
        <taxon>Bacteria</taxon>
        <taxon>Pseudomonadati</taxon>
        <taxon>Pseudomonadota</taxon>
        <taxon>Alphaproteobacteria</taxon>
        <taxon>Hyphomicrobiales</taxon>
        <taxon>Rhizobiaceae</taxon>
        <taxon>Sinorhizobium/Ensifer group</taxon>
        <taxon>Sinorhizobium</taxon>
    </lineage>
</organism>
<keyword id="KW-0997">Cell inner membrane</keyword>
<keyword id="KW-1003">Cell membrane</keyword>
<keyword id="KW-0328">Glycosyltransferase</keyword>
<keyword id="KW-0472">Membrane</keyword>
<keyword id="KW-0536">Nodulation</keyword>
<keyword id="KW-1185">Reference proteome</keyword>
<keyword id="KW-0808">Transferase</keyword>
<keyword id="KW-0812">Transmembrane</keyword>
<keyword id="KW-1133">Transmembrane helix</keyword>
<protein>
    <recommendedName>
        <fullName evidence="4">Cyclic beta-(1,2)-glucan synthase NdvB</fullName>
        <ecNumber evidence="7">2.4.1.-</ecNumber>
    </recommendedName>
</protein>
<dbReference type="EC" id="2.4.1.-" evidence="7"/>
<dbReference type="EMBL" id="J05219">
    <property type="protein sequence ID" value="AAA26305.1"/>
    <property type="status" value="ALT_INIT"/>
    <property type="molecule type" value="Genomic_DNA"/>
</dbReference>
<dbReference type="EMBL" id="AL591688">
    <property type="protein sequence ID" value="CAC47865.1"/>
    <property type="molecule type" value="Genomic_DNA"/>
</dbReference>
<dbReference type="PIR" id="A35548">
    <property type="entry name" value="A35548"/>
</dbReference>
<dbReference type="RefSeq" id="NP_387392.1">
    <property type="nucleotide sequence ID" value="NC_003047.1"/>
</dbReference>
<dbReference type="SMR" id="P20471"/>
<dbReference type="CAZy" id="GH94">
    <property type="family name" value="Glycoside Hydrolase Family 94"/>
</dbReference>
<dbReference type="CAZy" id="GT84">
    <property type="family name" value="Glycosyltransferase Family 84"/>
</dbReference>
<dbReference type="EnsemblBacteria" id="CAC47865">
    <property type="protein sequence ID" value="CAC47865"/>
    <property type="gene ID" value="SMc04382"/>
</dbReference>
<dbReference type="KEGG" id="sme:SMc04382"/>
<dbReference type="PATRIC" id="fig|266834.11.peg.4845"/>
<dbReference type="eggNOG" id="COG3459">
    <property type="taxonomic scope" value="Bacteria"/>
</dbReference>
<dbReference type="HOGENOM" id="CLU_000646_0_0_5"/>
<dbReference type="OrthoDB" id="9769991at2"/>
<dbReference type="PRO" id="PR:P20471"/>
<dbReference type="Proteomes" id="UP000001976">
    <property type="component" value="Chromosome"/>
</dbReference>
<dbReference type="GO" id="GO:0005886">
    <property type="term" value="C:plasma membrane"/>
    <property type="evidence" value="ECO:0007669"/>
    <property type="project" value="UniProtKB-SubCell"/>
</dbReference>
<dbReference type="GO" id="GO:0030246">
    <property type="term" value="F:carbohydrate binding"/>
    <property type="evidence" value="ECO:0007669"/>
    <property type="project" value="InterPro"/>
</dbReference>
<dbReference type="GO" id="GO:0016757">
    <property type="term" value="F:glycosyltransferase activity"/>
    <property type="evidence" value="ECO:0000314"/>
    <property type="project" value="UniProtKB"/>
</dbReference>
<dbReference type="GO" id="GO:0005975">
    <property type="term" value="P:carbohydrate metabolic process"/>
    <property type="evidence" value="ECO:0007669"/>
    <property type="project" value="InterPro"/>
</dbReference>
<dbReference type="CDD" id="cd11756">
    <property type="entry name" value="GH94N_ChvB_NdvB_1_like"/>
    <property type="match status" value="1"/>
</dbReference>
<dbReference type="CDD" id="cd11753">
    <property type="entry name" value="GH94N_ChvB_NdvB_2_like"/>
    <property type="match status" value="1"/>
</dbReference>
<dbReference type="FunFam" id="1.50.10.140:FF:000003">
    <property type="entry name" value="Cyclic beta-1,2-glucan synthase"/>
    <property type="match status" value="1"/>
</dbReference>
<dbReference type="FunFam" id="2.70.98.40:FF:000007">
    <property type="entry name" value="Cyclic beta-1,2-glucan synthase"/>
    <property type="match status" value="1"/>
</dbReference>
<dbReference type="Gene3D" id="1.50.10.10">
    <property type="match status" value="1"/>
</dbReference>
<dbReference type="Gene3D" id="1.50.10.140">
    <property type="match status" value="2"/>
</dbReference>
<dbReference type="Gene3D" id="2.70.98.40">
    <property type="entry name" value="Glycoside hydrolase, family 65, N-terminal domain"/>
    <property type="match status" value="2"/>
</dbReference>
<dbReference type="Gene3D" id="2.60.420.10">
    <property type="entry name" value="Maltose phosphorylase, domain 3"/>
    <property type="match status" value="1"/>
</dbReference>
<dbReference type="InterPro" id="IPR008928">
    <property type="entry name" value="6-hairpin_glycosidase_sf"/>
</dbReference>
<dbReference type="InterPro" id="IPR012341">
    <property type="entry name" value="6hp_glycosidase-like_sf"/>
</dbReference>
<dbReference type="InterPro" id="IPR009342">
    <property type="entry name" value="Carb-bd_put_dom"/>
</dbReference>
<dbReference type="InterPro" id="IPR011013">
    <property type="entry name" value="Gal_mutarotase_sf_dom"/>
</dbReference>
<dbReference type="InterPro" id="IPR033432">
    <property type="entry name" value="GH36_catalytic"/>
</dbReference>
<dbReference type="InterPro" id="IPR052047">
    <property type="entry name" value="GH94_Enzymes"/>
</dbReference>
<dbReference type="InterPro" id="IPR037824">
    <property type="entry name" value="GH94N_2_NdvB"/>
</dbReference>
<dbReference type="InterPro" id="IPR037820">
    <property type="entry name" value="GH94N_NdvB"/>
</dbReference>
<dbReference type="InterPro" id="IPR037018">
    <property type="entry name" value="Glyco_hydro_65_N_sf"/>
</dbReference>
<dbReference type="InterPro" id="IPR010383">
    <property type="entry name" value="Glyco_hydrolase_94"/>
</dbReference>
<dbReference type="InterPro" id="IPR019282">
    <property type="entry name" value="Glycoamylase-like_cons_dom"/>
</dbReference>
<dbReference type="PANTHER" id="PTHR37469:SF2">
    <property type="entry name" value="CELLOBIONIC ACID PHOSPHORYLASE"/>
    <property type="match status" value="1"/>
</dbReference>
<dbReference type="PANTHER" id="PTHR37469">
    <property type="entry name" value="CELLOBIONIC ACID PHOSPHORYLASE-RELATED"/>
    <property type="match status" value="1"/>
</dbReference>
<dbReference type="Pfam" id="PF17167">
    <property type="entry name" value="Glyco_hydro_36"/>
    <property type="match status" value="1"/>
</dbReference>
<dbReference type="Pfam" id="PF06165">
    <property type="entry name" value="Glyco_transf_36"/>
    <property type="match status" value="2"/>
</dbReference>
<dbReference type="Pfam" id="PF10091">
    <property type="entry name" value="Glycoamylase"/>
    <property type="match status" value="1"/>
</dbReference>
<dbReference type="SMART" id="SM01068">
    <property type="entry name" value="CBM_X"/>
    <property type="match status" value="2"/>
</dbReference>
<dbReference type="SUPFAM" id="SSF74650">
    <property type="entry name" value="Galactose mutarotase-like"/>
    <property type="match status" value="2"/>
</dbReference>
<dbReference type="SUPFAM" id="SSF48208">
    <property type="entry name" value="Six-hairpin glycosidases"/>
    <property type="match status" value="1"/>
</dbReference>
<evidence type="ECO:0000255" key="1"/>
<evidence type="ECO:0000269" key="2">
    <source>
    </source>
</evidence>
<evidence type="ECO:0000269" key="3">
    <source>
    </source>
</evidence>
<evidence type="ECO:0000303" key="4">
    <source>
    </source>
</evidence>
<evidence type="ECO:0000305" key="5"/>
<evidence type="ECO:0000305" key="6">
    <source>
    </source>
</evidence>
<evidence type="ECO:0000305" key="7">
    <source>
    </source>
</evidence>
<feature type="chain" id="PRO_0000096773" description="Cyclic beta-(1,2)-glucan synthase NdvB">
    <location>
        <begin position="1"/>
        <end position="2832"/>
    </location>
</feature>
<feature type="transmembrane region" description="Helical" evidence="1">
    <location>
        <begin position="411"/>
        <end position="431"/>
    </location>
</feature>
<feature type="transmembrane region" description="Helical" evidence="1">
    <location>
        <begin position="444"/>
        <end position="464"/>
    </location>
</feature>
<feature type="transmembrane region" description="Helical" evidence="1">
    <location>
        <begin position="810"/>
        <end position="830"/>
    </location>
</feature>
<feature type="transmembrane region" description="Helical" evidence="1">
    <location>
        <begin position="831"/>
        <end position="851"/>
    </location>
</feature>
<feature type="transmembrane region" description="Helical" evidence="1">
    <location>
        <begin position="880"/>
        <end position="900"/>
    </location>
</feature>
<feature type="transmembrane region" description="Helical" evidence="1">
    <location>
        <begin position="938"/>
        <end position="958"/>
    </location>
</feature>
<feature type="transmembrane region" description="Helical" evidence="1">
    <location>
        <begin position="959"/>
        <end position="979"/>
    </location>
</feature>
<feature type="domain" description="Glycoamylase-like" evidence="1">
    <location>
        <begin position="1299"/>
        <end position="1506"/>
    </location>
</feature>
<feature type="sequence conflict" description="In Ref. 1; AAA26305." evidence="5" ref="1">
    <original>T</original>
    <variation>A</variation>
    <location>
        <position position="47"/>
    </location>
</feature>
<feature type="sequence conflict" description="In Ref. 1; AAA26305." evidence="5" ref="1">
    <original>L</original>
    <variation>F</variation>
    <location>
        <position position="1187"/>
    </location>
</feature>
<feature type="sequence conflict" description="In Ref. 1; AAA26305." evidence="5" ref="1">
    <original>D</original>
    <variation>G</variation>
    <location>
        <position position="2602"/>
    </location>
</feature>
<reference key="1">
    <citation type="journal article" date="1990" name="J. Biol. Chem.">
        <title>The ndvB locus of Rhizobium meliloti encodes a 319-kDa protein involved in the production of beta-(1--&gt;2)-glucan.</title>
        <authorList>
            <person name="Ielpi L."/>
            <person name="Dylan T."/>
            <person name="Ditta G.S."/>
            <person name="Helinski D.R."/>
            <person name="Stanfield S.W."/>
        </authorList>
    </citation>
    <scope>NUCLEOTIDE SEQUENCE [GENOMIC DNA]</scope>
    <scope>FUNCTION</scope>
    <scope>DISRUPTION PHENOTYPE</scope>
    <scope>SUBCELLULAR LOCATION</scope>
</reference>
<reference key="2">
    <citation type="journal article" date="2001" name="Proc. Natl. Acad. Sci. U.S.A.">
        <title>Analysis of the chromosome sequence of the legume symbiont Sinorhizobium meliloti strain 1021.</title>
        <authorList>
            <person name="Capela D."/>
            <person name="Barloy-Hubler F."/>
            <person name="Gouzy J."/>
            <person name="Bothe G."/>
            <person name="Ampe F."/>
            <person name="Batut J."/>
            <person name="Boistard P."/>
            <person name="Becker A."/>
            <person name="Boutry M."/>
            <person name="Cadieu E."/>
            <person name="Dreano S."/>
            <person name="Gloux S."/>
            <person name="Godrie T."/>
            <person name="Goffeau A."/>
            <person name="Kahn D."/>
            <person name="Kiss E."/>
            <person name="Lelaure V."/>
            <person name="Masuy D."/>
            <person name="Pohl T."/>
            <person name="Portetelle D."/>
            <person name="Puehler A."/>
            <person name="Purnelle B."/>
            <person name="Ramsperger U."/>
            <person name="Renard C."/>
            <person name="Thebault P."/>
            <person name="Vandenbol M."/>
            <person name="Weidner S."/>
            <person name="Galibert F."/>
        </authorList>
    </citation>
    <scope>NUCLEOTIDE SEQUENCE [LARGE SCALE GENOMIC DNA]</scope>
    <source>
        <strain>1021</strain>
    </source>
</reference>
<reference key="3">
    <citation type="journal article" date="2001" name="Science">
        <title>The composite genome of the legume symbiont Sinorhizobium meliloti.</title>
        <authorList>
            <person name="Galibert F."/>
            <person name="Finan T.M."/>
            <person name="Long S.R."/>
            <person name="Puehler A."/>
            <person name="Abola P."/>
            <person name="Ampe F."/>
            <person name="Barloy-Hubler F."/>
            <person name="Barnett M.J."/>
            <person name="Becker A."/>
            <person name="Boistard P."/>
            <person name="Bothe G."/>
            <person name="Boutry M."/>
            <person name="Bowser L."/>
            <person name="Buhrmester J."/>
            <person name="Cadieu E."/>
            <person name="Capela D."/>
            <person name="Chain P."/>
            <person name="Cowie A."/>
            <person name="Davis R.W."/>
            <person name="Dreano S."/>
            <person name="Federspiel N.A."/>
            <person name="Fisher R.F."/>
            <person name="Gloux S."/>
            <person name="Godrie T."/>
            <person name="Goffeau A."/>
            <person name="Golding B."/>
            <person name="Gouzy J."/>
            <person name="Gurjal M."/>
            <person name="Hernandez-Lucas I."/>
            <person name="Hong A."/>
            <person name="Huizar L."/>
            <person name="Hyman R.W."/>
            <person name="Jones T."/>
            <person name="Kahn D."/>
            <person name="Kahn M.L."/>
            <person name="Kalman S."/>
            <person name="Keating D.H."/>
            <person name="Kiss E."/>
            <person name="Komp C."/>
            <person name="Lelaure V."/>
            <person name="Masuy D."/>
            <person name="Palm C."/>
            <person name="Peck M.C."/>
            <person name="Pohl T.M."/>
            <person name="Portetelle D."/>
            <person name="Purnelle B."/>
            <person name="Ramsperger U."/>
            <person name="Surzycki R."/>
            <person name="Thebault P."/>
            <person name="Vandenbol M."/>
            <person name="Vorhoelter F.J."/>
            <person name="Weidner S."/>
            <person name="Wells D.H."/>
            <person name="Wong K."/>
            <person name="Yeh K.-C."/>
            <person name="Batut J."/>
        </authorList>
    </citation>
    <scope>NUCLEOTIDE SEQUENCE [LARGE SCALE GENOMIC DNA]</scope>
    <source>
        <strain>1021</strain>
    </source>
</reference>
<reference key="4">
    <citation type="journal article" date="1996" name="J. Bacteriol.">
        <title>Cyclic beta-(1,2)-glucan synthesis in Rhizobiaceae: roles of the 319-kilodalton protein intermediate.</title>
        <authorList>
            <person name="Castro O.A."/>
            <person name="Zorreguieta A."/>
            <person name="Ielmini V."/>
            <person name="Vega G."/>
            <person name="Ielpi L."/>
        </authorList>
    </citation>
    <scope>FUNCTION</scope>
    <scope>CATALYTIC ACTIVITY</scope>
    <scope>SUBCELLULAR LOCATION</scope>
</reference>
<proteinExistence type="evidence at protein level"/>